<proteinExistence type="evidence at protein level"/>
<gene>
    <name type="primary">rbsD</name>
    <name type="ordered locus">b3748</name>
    <name type="ordered locus">JW5857</name>
</gene>
<dbReference type="EC" id="5.4.99.62" evidence="3"/>
<dbReference type="EMBL" id="M13169">
    <property type="protein sequence ID" value="AAA51472.1"/>
    <property type="molecule type" value="Genomic_DNA"/>
</dbReference>
<dbReference type="EMBL" id="L10328">
    <property type="protein sequence ID" value="AAA62101.1"/>
    <property type="status" value="ALT_INIT"/>
    <property type="molecule type" value="Genomic_DNA"/>
</dbReference>
<dbReference type="EMBL" id="U00096">
    <property type="protein sequence ID" value="AAC76771.2"/>
    <property type="molecule type" value="Genomic_DNA"/>
</dbReference>
<dbReference type="EMBL" id="AP009048">
    <property type="protein sequence ID" value="BAE77540.1"/>
    <property type="molecule type" value="Genomic_DNA"/>
</dbReference>
<dbReference type="EMBL" id="X68551">
    <property type="protein sequence ID" value="CAA48556.1"/>
    <property type="molecule type" value="Genomic_DNA"/>
</dbReference>
<dbReference type="PIR" id="E65178">
    <property type="entry name" value="E65178"/>
</dbReference>
<dbReference type="RefSeq" id="NP_418204.2">
    <property type="nucleotide sequence ID" value="NC_000913.3"/>
</dbReference>
<dbReference type="RefSeq" id="WP_001301979.1">
    <property type="nucleotide sequence ID" value="NZ_SSZK01000036.1"/>
</dbReference>
<dbReference type="SMR" id="P04982"/>
<dbReference type="BioGRID" id="4261236">
    <property type="interactions" value="16"/>
</dbReference>
<dbReference type="FunCoup" id="P04982">
    <property type="interactions" value="225"/>
</dbReference>
<dbReference type="STRING" id="511145.b3748"/>
<dbReference type="jPOST" id="P04982"/>
<dbReference type="PaxDb" id="511145-b3748"/>
<dbReference type="EnsemblBacteria" id="AAC76771">
    <property type="protein sequence ID" value="AAC76771"/>
    <property type="gene ID" value="b3748"/>
</dbReference>
<dbReference type="GeneID" id="75173982"/>
<dbReference type="GeneID" id="948267"/>
<dbReference type="KEGG" id="ecj:JW5857"/>
<dbReference type="KEGG" id="eco:b3748"/>
<dbReference type="KEGG" id="ecoc:C3026_20305"/>
<dbReference type="PATRIC" id="fig|1411691.4.peg.2952"/>
<dbReference type="EchoBASE" id="EB0810"/>
<dbReference type="eggNOG" id="COG1869">
    <property type="taxonomic scope" value="Bacteria"/>
</dbReference>
<dbReference type="HOGENOM" id="CLU_135498_0_0_6"/>
<dbReference type="InParanoid" id="P04982"/>
<dbReference type="OMA" id="EQTPYAN"/>
<dbReference type="OrthoDB" id="9805009at2"/>
<dbReference type="PhylomeDB" id="P04982"/>
<dbReference type="BioCyc" id="EcoCyc:EG10817-MONOMER"/>
<dbReference type="BioCyc" id="MetaCyc:EG10817-MONOMER"/>
<dbReference type="BRENDA" id="5.4.99.62">
    <property type="organism ID" value="2026"/>
</dbReference>
<dbReference type="UniPathway" id="UPA00916">
    <property type="reaction ID" value="UER00888"/>
</dbReference>
<dbReference type="PRO" id="PR:P04982"/>
<dbReference type="Proteomes" id="UP000000625">
    <property type="component" value="Chromosome"/>
</dbReference>
<dbReference type="GO" id="GO:0005829">
    <property type="term" value="C:cytosol"/>
    <property type="evidence" value="ECO:0000314"/>
    <property type="project" value="EcoCyc"/>
</dbReference>
<dbReference type="GO" id="GO:0062193">
    <property type="term" value="F:D-ribose pyranase activity"/>
    <property type="evidence" value="ECO:0000314"/>
    <property type="project" value="EcoCyc"/>
</dbReference>
<dbReference type="GO" id="GO:0042802">
    <property type="term" value="F:identical protein binding"/>
    <property type="evidence" value="ECO:0000314"/>
    <property type="project" value="EcoCyc"/>
</dbReference>
<dbReference type="GO" id="GO:0016872">
    <property type="term" value="F:intramolecular lyase activity"/>
    <property type="evidence" value="ECO:0007669"/>
    <property type="project" value="UniProtKB-UniRule"/>
</dbReference>
<dbReference type="GO" id="GO:0016866">
    <property type="term" value="F:intramolecular transferase activity"/>
    <property type="evidence" value="ECO:0000318"/>
    <property type="project" value="GO_Central"/>
</dbReference>
<dbReference type="GO" id="GO:0048029">
    <property type="term" value="F:monosaccharide binding"/>
    <property type="evidence" value="ECO:0007669"/>
    <property type="project" value="InterPro"/>
</dbReference>
<dbReference type="GO" id="GO:0019303">
    <property type="term" value="P:D-ribose catabolic process"/>
    <property type="evidence" value="ECO:0000315"/>
    <property type="project" value="EcoCyc"/>
</dbReference>
<dbReference type="FunFam" id="3.40.1650.10:FF:000002">
    <property type="entry name" value="D-ribose pyranase"/>
    <property type="match status" value="1"/>
</dbReference>
<dbReference type="Gene3D" id="3.40.1650.10">
    <property type="entry name" value="RbsD-like domain"/>
    <property type="match status" value="1"/>
</dbReference>
<dbReference type="HAMAP" id="MF_01661">
    <property type="entry name" value="D_rib_pyranase"/>
    <property type="match status" value="1"/>
</dbReference>
<dbReference type="InterPro" id="IPR023064">
    <property type="entry name" value="D-ribose_pyranase"/>
</dbReference>
<dbReference type="InterPro" id="IPR023750">
    <property type="entry name" value="RbsD-like_sf"/>
</dbReference>
<dbReference type="InterPro" id="IPR007721">
    <property type="entry name" value="RbsD_FucU"/>
</dbReference>
<dbReference type="NCBIfam" id="NF008761">
    <property type="entry name" value="PRK11797.1"/>
    <property type="match status" value="1"/>
</dbReference>
<dbReference type="PANTHER" id="PTHR37831">
    <property type="entry name" value="D-RIBOSE PYRANASE"/>
    <property type="match status" value="1"/>
</dbReference>
<dbReference type="PANTHER" id="PTHR37831:SF1">
    <property type="entry name" value="D-RIBOSE PYRANASE"/>
    <property type="match status" value="1"/>
</dbReference>
<dbReference type="Pfam" id="PF05025">
    <property type="entry name" value="RbsD_FucU"/>
    <property type="match status" value="1"/>
</dbReference>
<dbReference type="SUPFAM" id="SSF102546">
    <property type="entry name" value="RbsD-like"/>
    <property type="match status" value="1"/>
</dbReference>
<name>RBSD_ECOLI</name>
<organism>
    <name type="scientific">Escherichia coli (strain K12)</name>
    <dbReference type="NCBI Taxonomy" id="83333"/>
    <lineage>
        <taxon>Bacteria</taxon>
        <taxon>Pseudomonadati</taxon>
        <taxon>Pseudomonadota</taxon>
        <taxon>Gammaproteobacteria</taxon>
        <taxon>Enterobacterales</taxon>
        <taxon>Enterobacteriaceae</taxon>
        <taxon>Escherichia</taxon>
    </lineage>
</organism>
<keyword id="KW-0119">Carbohydrate metabolism</keyword>
<keyword id="KW-0963">Cytoplasm</keyword>
<keyword id="KW-0903">Direct protein sequencing</keyword>
<keyword id="KW-0413">Isomerase</keyword>
<keyword id="KW-1185">Reference proteome</keyword>
<reference key="1">
    <citation type="journal article" date="1986" name="J. Biol. Chem.">
        <title>The nucleotide sequences of the rbsD, rbsA, and rbsC genes of Escherichia coli K12.</title>
        <authorList>
            <person name="Bell A.W."/>
            <person name="Buckel S.D."/>
            <person name="Groarke J.M."/>
            <person name="Hope J.N."/>
            <person name="Kingsley D.H."/>
            <person name="Hermodson M.A."/>
        </authorList>
    </citation>
    <scope>NUCLEOTIDE SEQUENCE [GENOMIC DNA]</scope>
    <source>
        <strain>K12</strain>
    </source>
</reference>
<reference key="2">
    <citation type="journal article" date="1993" name="Genomics">
        <title>DNA sequence and analysis of 136 kilobases of the Escherichia coli genome: organizational symmetry around the origin of replication.</title>
        <authorList>
            <person name="Burland V.D."/>
            <person name="Plunkett G. III"/>
            <person name="Daniels D.L."/>
            <person name="Blattner F.R."/>
        </authorList>
    </citation>
    <scope>NUCLEOTIDE SEQUENCE [LARGE SCALE GENOMIC DNA]</scope>
    <source>
        <strain>K12 / MG1655 / ATCC 47076</strain>
    </source>
</reference>
<reference key="3">
    <citation type="journal article" date="1997" name="Science">
        <title>The complete genome sequence of Escherichia coli K-12.</title>
        <authorList>
            <person name="Blattner F.R."/>
            <person name="Plunkett G. III"/>
            <person name="Bloch C.A."/>
            <person name="Perna N.T."/>
            <person name="Burland V."/>
            <person name="Riley M."/>
            <person name="Collado-Vides J."/>
            <person name="Glasner J.D."/>
            <person name="Rode C.K."/>
            <person name="Mayhew G.F."/>
            <person name="Gregor J."/>
            <person name="Davis N.W."/>
            <person name="Kirkpatrick H.A."/>
            <person name="Goeden M.A."/>
            <person name="Rose D.J."/>
            <person name="Mau B."/>
            <person name="Shao Y."/>
        </authorList>
    </citation>
    <scope>NUCLEOTIDE SEQUENCE [LARGE SCALE GENOMIC DNA]</scope>
    <source>
        <strain>K12 / MG1655 / ATCC 47076</strain>
    </source>
</reference>
<reference key="4">
    <citation type="journal article" date="2006" name="Mol. Syst. Biol.">
        <title>Highly accurate genome sequences of Escherichia coli K-12 strains MG1655 and W3110.</title>
        <authorList>
            <person name="Hayashi K."/>
            <person name="Morooka N."/>
            <person name="Yamamoto Y."/>
            <person name="Fujita K."/>
            <person name="Isono K."/>
            <person name="Choi S."/>
            <person name="Ohtsubo E."/>
            <person name="Baba T."/>
            <person name="Wanner B.L."/>
            <person name="Mori H."/>
            <person name="Horiuchi T."/>
        </authorList>
    </citation>
    <scope>NUCLEOTIDE SEQUENCE [LARGE SCALE GENOMIC DNA]</scope>
    <source>
        <strain>K12 / W3110 / ATCC 27325 / DSM 5911</strain>
    </source>
</reference>
<reference key="5">
    <citation type="journal article" date="2007" name="Genes Genet. Syst.">
        <title>A role of RnlA in the RNase LS activity from Escherichia coli.</title>
        <authorList>
            <person name="Otsuka Y."/>
            <person name="Koga M."/>
            <person name="Iwamoto A."/>
            <person name="Yonesaki T."/>
        </authorList>
    </citation>
    <scope>PROTEIN SEQUENCE OF 1-8</scope>
    <source>
        <strain>K12</strain>
    </source>
</reference>
<reference key="6">
    <citation type="journal article" date="1993" name="J. Bacteriol.">
        <title>Nucleotide sequence and 3'-end deletion studies indicate that the K(+)-uptake protein kup from Escherichia coli is composed of a hydrophobic core linked to a large and partially essential hydrophilic C-terminus.</title>
        <authorList>
            <person name="Schleyer M."/>
            <person name="Bakker E.P."/>
        </authorList>
    </citation>
    <scope>NUCLEOTIDE SEQUENCE [GENOMIC DNA] OF 1-41</scope>
    <source>
        <strain>K12</strain>
    </source>
</reference>
<reference key="7">
    <citation type="journal article" date="2001" name="Acta Crystallogr. D">
        <title>Crystallization and preliminary X-ray crystallographic analysis of Escherichia coli RbsD, a component of the ribose-transport system with unknown biochemical function.</title>
        <authorList>
            <person name="Kim M.-S."/>
            <person name="Oh H."/>
            <person name="Park C."/>
            <person name="Oh B.-H."/>
        </authorList>
    </citation>
    <scope>CRYSTALLIZATION</scope>
</reference>
<reference key="8">
    <citation type="journal article" date="2003" name="J. Biol. Chem.">
        <title>Crystal structures of RbsD leading to the identification of cytoplasmic sugar-binding proteins with a novel folding architecture.</title>
        <authorList>
            <person name="Kim M.-S."/>
            <person name="Shin J."/>
            <person name="Lee W."/>
            <person name="Lee H.-S."/>
            <person name="Oh B.-H."/>
        </authorList>
    </citation>
    <scope>SUBUNIT</scope>
</reference>
<reference key="9">
    <citation type="journal article" date="2004" name="J. Biol. Chem.">
        <title>NMR application probes a novel and ubiquitous family of enzymes that alter monosaccharide configuration.</title>
        <authorList>
            <person name="Ryu K.-S."/>
            <person name="Kim C."/>
            <person name="Kim I."/>
            <person name="Yoo S."/>
            <person name="Choi B.-S."/>
            <person name="Park C."/>
        </authorList>
    </citation>
    <scope>FUNCTION</scope>
    <scope>CATALYTIC ACTIVITY</scope>
    <scope>MUTAGENESIS OF HIS-20 AND HIS-106</scope>
    <scope>REACTION MECHANISM</scope>
</reference>
<reference key="10">
    <citation type="journal article" date="2006" name="Protein Sci.">
        <title>Stepwise disassembly and apparent nonstepwise reassembly for the oligomeric RbsD protein.</title>
        <authorList>
            <person name="Feng Y."/>
            <person name="Jiao W."/>
            <person name="Fu X."/>
            <person name="Chang Z."/>
        </authorList>
    </citation>
    <scope>SUBUNIT</scope>
</reference>
<comment type="function">
    <text evidence="3">Catalyzes the interconversion of beta-pyran and beta-furan forms of D-ribose. It also catalyzes the conversion between beta-allofuranose and beta-allopyranose.</text>
</comment>
<comment type="catalytic activity">
    <reaction evidence="3">
        <text>beta-D-ribopyranose = beta-D-ribofuranose</text>
        <dbReference type="Rhea" id="RHEA:25432"/>
        <dbReference type="ChEBI" id="CHEBI:27476"/>
        <dbReference type="ChEBI" id="CHEBI:47002"/>
        <dbReference type="EC" id="5.4.99.62"/>
    </reaction>
</comment>
<comment type="catalytic activity">
    <reaction evidence="3">
        <text>beta-D-allofuranose = beta-D-allopyranose</text>
        <dbReference type="Rhea" id="RHEA:25609"/>
        <dbReference type="ChEBI" id="CHEBI:40656"/>
        <dbReference type="ChEBI" id="CHEBI:50256"/>
        <dbReference type="EC" id="5.4.99.62"/>
    </reaction>
</comment>
<comment type="pathway">
    <text>Carbohydrate metabolism; D-ribose degradation; D-ribose 5-phosphate from beta-D-ribopyranose: step 1/2.</text>
</comment>
<comment type="subunit">
    <text evidence="2 4">Homodecamer.</text>
</comment>
<comment type="subcellular location">
    <subcellularLocation>
        <location evidence="5">Cytoplasm</location>
    </subcellularLocation>
</comment>
<comment type="similarity">
    <text evidence="5">Belongs to the RbsD / FucU family. RbsD subfamily.</text>
</comment>
<comment type="caution">
    <text evidence="6 7">Was originally thought (PubMed:3011793) to be a high affinity ribose transport protein, but further analysis (PubMed:15060078) shows that it is a D-ribose pyranase.</text>
</comment>
<comment type="sequence caution" evidence="5">
    <conflict type="erroneous initiation">
        <sequence resource="EMBL-CDS" id="AAA62101"/>
    </conflict>
    <text>Extended N-terminus.</text>
</comment>
<accession>P04982</accession>
<accession>Q2M866</accession>
<sequence>MKKGTVLNSDISSVISRLGHTDTLVVCDAGLPIPKSTTRIDMALTQGVPSFMQVLGVVTNEMQVEAAIIAEEIKHHNPQLHETLLTHLEQLQKHQGNTIEIRYTTHEQFKQQTAESQAVIRSGECSPYANIILCAGVTF</sequence>
<protein>
    <recommendedName>
        <fullName>D-ribose pyranase</fullName>
        <ecNumber evidence="3">5.4.99.62</ecNumber>
    </recommendedName>
</protein>
<feature type="chain" id="PRO_0000097192" description="D-ribose pyranase">
    <location>
        <begin position="1"/>
        <end position="139"/>
    </location>
</feature>
<feature type="active site" description="Proton donor" evidence="5">
    <location>
        <position position="20"/>
    </location>
</feature>
<feature type="binding site" evidence="1">
    <location>
        <position position="28"/>
    </location>
    <ligand>
        <name>substrate</name>
    </ligand>
</feature>
<feature type="binding site" evidence="1">
    <location>
        <position position="106"/>
    </location>
    <ligand>
        <name>substrate</name>
    </ligand>
</feature>
<feature type="binding site" evidence="1">
    <location>
        <begin position="128"/>
        <end position="130"/>
    </location>
    <ligand>
        <name>substrate</name>
    </ligand>
</feature>
<feature type="mutagenesis site" description="Loss of pyranase activity." evidence="3">
    <original>H</original>
    <variation>A</variation>
    <location>
        <position position="20"/>
    </location>
</feature>
<feature type="mutagenesis site" description="Retains one-third of the original activity." evidence="3">
    <original>H</original>
    <variation>A</variation>
    <location>
        <position position="106"/>
    </location>
</feature>
<evidence type="ECO:0000250" key="1"/>
<evidence type="ECO:0000269" key="2">
    <source>
    </source>
</evidence>
<evidence type="ECO:0000269" key="3">
    <source>
    </source>
</evidence>
<evidence type="ECO:0000269" key="4">
    <source>
    </source>
</evidence>
<evidence type="ECO:0000305" key="5"/>
<evidence type="ECO:0000305" key="6">
    <source>
    </source>
</evidence>
<evidence type="ECO:0000305" key="7">
    <source>
    </source>
</evidence>